<accession>C1CBJ1</accession>
<keyword id="KW-0963">Cytoplasm</keyword>
<keyword id="KW-0251">Elongation factor</keyword>
<keyword id="KW-0648">Protein biosynthesis</keyword>
<comment type="function">
    <text evidence="1">Associates with the EF-Tu.GDP complex and induces the exchange of GDP to GTP. It remains bound to the aminoacyl-tRNA.EF-Tu.GTP complex up to the GTP hydrolysis stage on the ribosome.</text>
</comment>
<comment type="subcellular location">
    <subcellularLocation>
        <location evidence="1">Cytoplasm</location>
    </subcellularLocation>
</comment>
<comment type="similarity">
    <text evidence="1">Belongs to the EF-Ts family.</text>
</comment>
<evidence type="ECO:0000255" key="1">
    <source>
        <dbReference type="HAMAP-Rule" id="MF_00050"/>
    </source>
</evidence>
<proteinExistence type="inferred from homology"/>
<name>EFTS_STRP7</name>
<sequence>MAEITAKLVKELREKSGAGVMDAKKALVETDGDIEKAIELLREKGMAKAAKKADRVAAEGLTGVYVNGNVAAVIEVNAETDFVAKNAQFVELVNTTAKVIAEGKPANNEEALALIMPSGETLEAAYVSATATIGEKISFRRFALIEKTDAQHFGAYQHNGGRIGVISVVEDGDEALAKQLSMHIAAMKPTVLSYKELDEQFVKDELAQLNHVIDQDNESRAMVNKPALPHLKYGSKAQLTDDVIAQAEADIKAELAAEGKPEKIWDKIIPGKMDRFMLDNTKVDQAYTLLAQVYIMDDSKTVEAYLESVNASVVEFARFEVGEGIEKAANDFEAEVAATMAAALNN</sequence>
<protein>
    <recommendedName>
        <fullName evidence="1">Elongation factor Ts</fullName>
        <shortName evidence="1">EF-Ts</shortName>
    </recommendedName>
</protein>
<feature type="chain" id="PRO_1000189878" description="Elongation factor Ts">
    <location>
        <begin position="1"/>
        <end position="346"/>
    </location>
</feature>
<feature type="region of interest" description="Involved in Mg(2+) ion dislocation from EF-Tu" evidence="1">
    <location>
        <begin position="80"/>
        <end position="83"/>
    </location>
</feature>
<gene>
    <name evidence="1" type="primary">tsf</name>
    <name type="ordered locus">SP70585_2341</name>
</gene>
<dbReference type="EMBL" id="CP000918">
    <property type="protein sequence ID" value="ACO16468.1"/>
    <property type="molecule type" value="Genomic_DNA"/>
</dbReference>
<dbReference type="RefSeq" id="WP_000808062.1">
    <property type="nucleotide sequence ID" value="NC_012468.1"/>
</dbReference>
<dbReference type="SMR" id="C1CBJ1"/>
<dbReference type="KEGG" id="snm:SP70585_2341"/>
<dbReference type="HOGENOM" id="CLU_047155_0_1_9"/>
<dbReference type="Proteomes" id="UP000002211">
    <property type="component" value="Chromosome"/>
</dbReference>
<dbReference type="GO" id="GO:0005737">
    <property type="term" value="C:cytoplasm"/>
    <property type="evidence" value="ECO:0007669"/>
    <property type="project" value="UniProtKB-SubCell"/>
</dbReference>
<dbReference type="GO" id="GO:0003746">
    <property type="term" value="F:translation elongation factor activity"/>
    <property type="evidence" value="ECO:0007669"/>
    <property type="project" value="UniProtKB-UniRule"/>
</dbReference>
<dbReference type="CDD" id="cd14275">
    <property type="entry name" value="UBA_EF-Ts"/>
    <property type="match status" value="1"/>
</dbReference>
<dbReference type="FunFam" id="1.10.286.20:FF:000004">
    <property type="entry name" value="Elongation factor Ts"/>
    <property type="match status" value="1"/>
</dbReference>
<dbReference type="FunFam" id="1.10.8.10:FF:000001">
    <property type="entry name" value="Elongation factor Ts"/>
    <property type="match status" value="1"/>
</dbReference>
<dbReference type="FunFam" id="3.30.479.20:FF:000009">
    <property type="entry name" value="Elongation factor Ts"/>
    <property type="match status" value="1"/>
</dbReference>
<dbReference type="FunFam" id="3.30.479.20:FF:000013">
    <property type="entry name" value="Elongation factor Ts"/>
    <property type="match status" value="1"/>
</dbReference>
<dbReference type="Gene3D" id="1.10.286.20">
    <property type="match status" value="1"/>
</dbReference>
<dbReference type="Gene3D" id="1.10.8.10">
    <property type="entry name" value="DNA helicase RuvA subunit, C-terminal domain"/>
    <property type="match status" value="1"/>
</dbReference>
<dbReference type="Gene3D" id="3.30.479.20">
    <property type="entry name" value="Elongation factor Ts, dimerisation domain"/>
    <property type="match status" value="2"/>
</dbReference>
<dbReference type="HAMAP" id="MF_00050">
    <property type="entry name" value="EF_Ts"/>
    <property type="match status" value="1"/>
</dbReference>
<dbReference type="InterPro" id="IPR036402">
    <property type="entry name" value="EF-Ts_dimer_sf"/>
</dbReference>
<dbReference type="InterPro" id="IPR001816">
    <property type="entry name" value="Transl_elong_EFTs/EF1B"/>
</dbReference>
<dbReference type="InterPro" id="IPR014039">
    <property type="entry name" value="Transl_elong_EFTs/EF1B_dimer"/>
</dbReference>
<dbReference type="InterPro" id="IPR018101">
    <property type="entry name" value="Transl_elong_Ts_CS"/>
</dbReference>
<dbReference type="InterPro" id="IPR009060">
    <property type="entry name" value="UBA-like_sf"/>
</dbReference>
<dbReference type="NCBIfam" id="TIGR00116">
    <property type="entry name" value="tsf"/>
    <property type="match status" value="1"/>
</dbReference>
<dbReference type="PANTHER" id="PTHR11741">
    <property type="entry name" value="ELONGATION FACTOR TS"/>
    <property type="match status" value="1"/>
</dbReference>
<dbReference type="PANTHER" id="PTHR11741:SF0">
    <property type="entry name" value="ELONGATION FACTOR TS, MITOCHONDRIAL"/>
    <property type="match status" value="1"/>
</dbReference>
<dbReference type="Pfam" id="PF00889">
    <property type="entry name" value="EF_TS"/>
    <property type="match status" value="1"/>
</dbReference>
<dbReference type="SUPFAM" id="SSF54713">
    <property type="entry name" value="Elongation factor Ts (EF-Ts), dimerisation domain"/>
    <property type="match status" value="2"/>
</dbReference>
<dbReference type="SUPFAM" id="SSF46934">
    <property type="entry name" value="UBA-like"/>
    <property type="match status" value="1"/>
</dbReference>
<dbReference type="PROSITE" id="PS01126">
    <property type="entry name" value="EF_TS_1"/>
    <property type="match status" value="1"/>
</dbReference>
<dbReference type="PROSITE" id="PS01127">
    <property type="entry name" value="EF_TS_2"/>
    <property type="match status" value="1"/>
</dbReference>
<organism>
    <name type="scientific">Streptococcus pneumoniae (strain 70585)</name>
    <dbReference type="NCBI Taxonomy" id="488221"/>
    <lineage>
        <taxon>Bacteria</taxon>
        <taxon>Bacillati</taxon>
        <taxon>Bacillota</taxon>
        <taxon>Bacilli</taxon>
        <taxon>Lactobacillales</taxon>
        <taxon>Streptococcaceae</taxon>
        <taxon>Streptococcus</taxon>
    </lineage>
</organism>
<reference key="1">
    <citation type="journal article" date="2010" name="Genome Biol.">
        <title>Structure and dynamics of the pan-genome of Streptococcus pneumoniae and closely related species.</title>
        <authorList>
            <person name="Donati C."/>
            <person name="Hiller N.L."/>
            <person name="Tettelin H."/>
            <person name="Muzzi A."/>
            <person name="Croucher N.J."/>
            <person name="Angiuoli S.V."/>
            <person name="Oggioni M."/>
            <person name="Dunning Hotopp J.C."/>
            <person name="Hu F.Z."/>
            <person name="Riley D.R."/>
            <person name="Covacci A."/>
            <person name="Mitchell T.J."/>
            <person name="Bentley S.D."/>
            <person name="Kilian M."/>
            <person name="Ehrlich G.D."/>
            <person name="Rappuoli R."/>
            <person name="Moxon E.R."/>
            <person name="Masignani V."/>
        </authorList>
    </citation>
    <scope>NUCLEOTIDE SEQUENCE [LARGE SCALE GENOMIC DNA]</scope>
    <source>
        <strain>70585</strain>
    </source>
</reference>